<organism>
    <name type="scientific">Neurospora crassa (strain ATCC 24698 / 74-OR23-1A / CBS 708.71 / DSM 1257 / FGSC 987)</name>
    <dbReference type="NCBI Taxonomy" id="367110"/>
    <lineage>
        <taxon>Eukaryota</taxon>
        <taxon>Fungi</taxon>
        <taxon>Dikarya</taxon>
        <taxon>Ascomycota</taxon>
        <taxon>Pezizomycotina</taxon>
        <taxon>Sordariomycetes</taxon>
        <taxon>Sordariomycetidae</taxon>
        <taxon>Sordariales</taxon>
        <taxon>Sordariaceae</taxon>
        <taxon>Neurospora</taxon>
    </lineage>
</organism>
<name>MDM12_NEUCR</name>
<feature type="chain" id="PRO_0000384296" description="Mitochondrial distribution and morphology protein 12">
    <location>
        <begin position="1"/>
        <end position="675"/>
    </location>
</feature>
<feature type="domain" description="SMP-LTD" evidence="1">
    <location>
        <begin position="1"/>
        <end position="675"/>
    </location>
</feature>
<feature type="region of interest" description="Disordered" evidence="2">
    <location>
        <begin position="66"/>
        <end position="186"/>
    </location>
</feature>
<feature type="region of interest" description="Disordered" evidence="2">
    <location>
        <begin position="241"/>
        <end position="270"/>
    </location>
</feature>
<feature type="region of interest" description="Disordered" evidence="2">
    <location>
        <begin position="307"/>
        <end position="327"/>
    </location>
</feature>
<feature type="region of interest" description="Disordered" evidence="2">
    <location>
        <begin position="365"/>
        <end position="390"/>
    </location>
</feature>
<feature type="region of interest" description="Disordered" evidence="2">
    <location>
        <begin position="444"/>
        <end position="517"/>
    </location>
</feature>
<feature type="compositionally biased region" description="Acidic residues" evidence="2">
    <location>
        <begin position="78"/>
        <end position="101"/>
    </location>
</feature>
<feature type="compositionally biased region" description="Low complexity" evidence="2">
    <location>
        <begin position="123"/>
        <end position="137"/>
    </location>
</feature>
<feature type="compositionally biased region" description="Gly residues" evidence="2">
    <location>
        <begin position="261"/>
        <end position="270"/>
    </location>
</feature>
<feature type="compositionally biased region" description="Low complexity" evidence="2">
    <location>
        <begin position="317"/>
        <end position="327"/>
    </location>
</feature>
<feature type="compositionally biased region" description="Polar residues" evidence="2">
    <location>
        <begin position="373"/>
        <end position="382"/>
    </location>
</feature>
<feature type="compositionally biased region" description="Polar residues" evidence="2">
    <location>
        <begin position="454"/>
        <end position="469"/>
    </location>
</feature>
<feature type="compositionally biased region" description="Acidic residues" evidence="2">
    <location>
        <begin position="497"/>
        <end position="510"/>
    </location>
</feature>
<accession>Q7SEZ6</accession>
<comment type="function">
    <text evidence="1">Component of the ERMES/MDM complex, which serves as a molecular tether to connect the endoplasmic reticulum (ER) and mitochondria. Components of this complex are involved in the control of mitochondrial shape and protein biogenesis, and function in nonvesicular lipid trafficking between the ER and mitochondria. Mdm12 is required for the interaction of the ER-resident membrane protein MMM1 and the outer mitochondrial membrane-resident beta-barrel protein mdm10. The mdm12-mmm-1 subcomplex functions in the major beta-barrel assembly pathway that is responsible for biogenesis of all mitochondrial outer membrane beta-barrel proteins, and acts in a late step after the SAM complex. The mdm10-mdm12-mmm-1 subcomplex further acts in the TOM40-specific pathway after the action of the mdm12-mmm1 complex. Essential for establishing and maintaining the structure of mitochondria and maintenance of mtDNA nucleoids.</text>
</comment>
<comment type="subunit">
    <text evidence="1">Component of the ER-mitochondria encounter structure (ERMES) or MDM complex, composed of mmm-1, mdm10, mdm12 and mdm34. A mmm-1 homodimer associates with one molecule of mdm12 on each side in a pairwise head-to-tail manner, and the SMP-LTD domains of mmm-1 and mdm12 generate a continuous hydrophobic tunnel for phospholipid trafficking.</text>
</comment>
<comment type="subcellular location">
    <subcellularLocation>
        <location evidence="1">Mitochondrion outer membrane</location>
        <topology evidence="1">Peripheral membrane protein</topology>
        <orientation evidence="1">Cytoplasmic side</orientation>
    </subcellularLocation>
    <subcellularLocation>
        <location evidence="1">Endoplasmic reticulum membrane</location>
        <topology evidence="1">Peripheral membrane protein</topology>
        <orientation evidence="1">Cytoplasmic side</orientation>
    </subcellularLocation>
    <text evidence="1">The ERMES/MDM complex localizes to a few discrete foci (around 10 per single cell), that represent mitochondria-endoplasmic reticulum junctions. These foci are often found next to mtDNA nucleoids.</text>
</comment>
<comment type="domain">
    <text evidence="1">The SMP-LTD domain is a barrel-like domain that can bind various types of glycerophospholipids in its interior and mediate their transfer between two adjacent bilayers.</text>
</comment>
<comment type="similarity">
    <text evidence="1">Belongs to the MDM12 family.</text>
</comment>
<reference key="1">
    <citation type="journal article" date="2003" name="Nature">
        <title>The genome sequence of the filamentous fungus Neurospora crassa.</title>
        <authorList>
            <person name="Galagan J.E."/>
            <person name="Calvo S.E."/>
            <person name="Borkovich K.A."/>
            <person name="Selker E.U."/>
            <person name="Read N.D."/>
            <person name="Jaffe D.B."/>
            <person name="FitzHugh W."/>
            <person name="Ma L.-J."/>
            <person name="Smirnov S."/>
            <person name="Purcell S."/>
            <person name="Rehman B."/>
            <person name="Elkins T."/>
            <person name="Engels R."/>
            <person name="Wang S."/>
            <person name="Nielsen C.B."/>
            <person name="Butler J."/>
            <person name="Endrizzi M."/>
            <person name="Qui D."/>
            <person name="Ianakiev P."/>
            <person name="Bell-Pedersen D."/>
            <person name="Nelson M.A."/>
            <person name="Werner-Washburne M."/>
            <person name="Selitrennikoff C.P."/>
            <person name="Kinsey J.A."/>
            <person name="Braun E.L."/>
            <person name="Zelter A."/>
            <person name="Schulte U."/>
            <person name="Kothe G.O."/>
            <person name="Jedd G."/>
            <person name="Mewes H.-W."/>
            <person name="Staben C."/>
            <person name="Marcotte E."/>
            <person name="Greenberg D."/>
            <person name="Roy A."/>
            <person name="Foley K."/>
            <person name="Naylor J."/>
            <person name="Stange-Thomann N."/>
            <person name="Barrett R."/>
            <person name="Gnerre S."/>
            <person name="Kamal M."/>
            <person name="Kamvysselis M."/>
            <person name="Mauceli E.W."/>
            <person name="Bielke C."/>
            <person name="Rudd S."/>
            <person name="Frishman D."/>
            <person name="Krystofova S."/>
            <person name="Rasmussen C."/>
            <person name="Metzenberg R.L."/>
            <person name="Perkins D.D."/>
            <person name="Kroken S."/>
            <person name="Cogoni C."/>
            <person name="Macino G."/>
            <person name="Catcheside D.E.A."/>
            <person name="Li W."/>
            <person name="Pratt R.J."/>
            <person name="Osmani S.A."/>
            <person name="DeSouza C.P.C."/>
            <person name="Glass N.L."/>
            <person name="Orbach M.J."/>
            <person name="Berglund J.A."/>
            <person name="Voelker R."/>
            <person name="Yarden O."/>
            <person name="Plamann M."/>
            <person name="Seiler S."/>
            <person name="Dunlap J.C."/>
            <person name="Radford A."/>
            <person name="Aramayo R."/>
            <person name="Natvig D.O."/>
            <person name="Alex L.A."/>
            <person name="Mannhaupt G."/>
            <person name="Ebbole D.J."/>
            <person name="Freitag M."/>
            <person name="Paulsen I."/>
            <person name="Sachs M.S."/>
            <person name="Lander E.S."/>
            <person name="Nusbaum C."/>
            <person name="Birren B.W."/>
        </authorList>
    </citation>
    <scope>NUCLEOTIDE SEQUENCE [LARGE SCALE GENOMIC DNA]</scope>
    <source>
        <strain>ATCC 24698 / 74-OR23-1A / CBS 708.71 / DSM 1257 / FGSC 987</strain>
    </source>
</reference>
<protein>
    <recommendedName>
        <fullName evidence="1">Mitochondrial distribution and morphology protein 12</fullName>
    </recommendedName>
    <alternativeName>
        <fullName evidence="1">Mitochondrial inheritance component mdm-12</fullName>
    </alternativeName>
</protein>
<gene>
    <name evidence="1" type="primary">mdm12</name>
    <name type="ORF">NCU02067</name>
</gene>
<keyword id="KW-0256">Endoplasmic reticulum</keyword>
<keyword id="KW-0445">Lipid transport</keyword>
<keyword id="KW-0446">Lipid-binding</keyword>
<keyword id="KW-0472">Membrane</keyword>
<keyword id="KW-0496">Mitochondrion</keyword>
<keyword id="KW-1000">Mitochondrion outer membrane</keyword>
<keyword id="KW-1185">Reference proteome</keyword>
<keyword id="KW-0813">Transport</keyword>
<evidence type="ECO:0000255" key="1">
    <source>
        <dbReference type="HAMAP-Rule" id="MF_03104"/>
    </source>
</evidence>
<evidence type="ECO:0000256" key="2">
    <source>
        <dbReference type="SAM" id="MobiDB-lite"/>
    </source>
</evidence>
<proteinExistence type="inferred from homology"/>
<sequence length="675" mass="70449">MSIDLNWDTVTGGPDGQELAQKIRDFIHEKFQAVPLPRFIKSVTVHDFEFGSIPPEIELKDITDPLPDFYEEQPGIDSSEESDSEEEVAYENEGEYLDDPVEQQYGRLRGASASESRRRLTVNSSTGSRNGSGPNSGRVAYLPPHLNPHYNGGSGNNSSPSLDRDGRYYRDPNTAGLGGPAHGTNHHHADLGSPFLGVSTPGIPGGTSNLNLHYFTSQFTAGLSGTQTPLAAVAGAAHQRGPSWIADQQQQQQQQNNMLPGGAGGGGAGGGGMGGPVAAAAAAAAATNQGLHSSSTPHLRLHFPGVGTGKPTPGPSPLTGTSTPLGTLGTAGGVGGIGRGMGMAGMGSMASMGYPPTAPVLAIPTGPRHKRNPSSQSLNSVGDYSPVAPAPAERQGLFSAAAATSPPSSTPSPAVGLGIGGRGIGAAGAGAGALATSGPRLQIPKQGLREKHSVSTLAPNSAGTSNNRAGSAILDDDDGFLDGMHDHRDHPAQQQLEPEEDEEEEEEGEEERQRFREPRVEDIQAVFRIKYAGDVKLLLTADILLDYPMPSFVGIPVRLSITGLTFDGVGVVANIRKRVHFCFLSPEDAVAAVGGEENKAAGSGNGSGIGGGSDGAKTKMGGLLQEIRVESEIGQRESGKQSLKNVGKVERFVLEQVRRIFEEEFVYPSFWTFLV</sequence>
<dbReference type="EMBL" id="CM002236">
    <property type="protein sequence ID" value="EAA35358.1"/>
    <property type="molecule type" value="Genomic_DNA"/>
</dbReference>
<dbReference type="RefSeq" id="XP_964594.1">
    <property type="nucleotide sequence ID" value="XM_959501.2"/>
</dbReference>
<dbReference type="SMR" id="Q7SEZ6"/>
<dbReference type="FunCoup" id="Q7SEZ6">
    <property type="interactions" value="42"/>
</dbReference>
<dbReference type="STRING" id="367110.Q7SEZ6"/>
<dbReference type="PaxDb" id="5141-EFNCRP00000001291"/>
<dbReference type="EnsemblFungi" id="EAA35358">
    <property type="protein sequence ID" value="EAA35358"/>
    <property type="gene ID" value="NCU02067"/>
</dbReference>
<dbReference type="GeneID" id="3880756"/>
<dbReference type="KEGG" id="ncr:NCU02067"/>
<dbReference type="VEuPathDB" id="FungiDB:NCU02067"/>
<dbReference type="HOGENOM" id="CLU_026794_0_0_1"/>
<dbReference type="InParanoid" id="Q7SEZ6"/>
<dbReference type="OrthoDB" id="3356905at2759"/>
<dbReference type="Proteomes" id="UP000001805">
    <property type="component" value="Chromosome 1, Linkage Group I"/>
</dbReference>
<dbReference type="GO" id="GO:0005789">
    <property type="term" value="C:endoplasmic reticulum membrane"/>
    <property type="evidence" value="ECO:0007669"/>
    <property type="project" value="UniProtKB-SubCell"/>
</dbReference>
<dbReference type="GO" id="GO:0032865">
    <property type="term" value="C:ERMES complex"/>
    <property type="evidence" value="ECO:0000318"/>
    <property type="project" value="GO_Central"/>
</dbReference>
<dbReference type="GO" id="GO:0008289">
    <property type="term" value="F:lipid binding"/>
    <property type="evidence" value="ECO:0007669"/>
    <property type="project" value="UniProtKB-KW"/>
</dbReference>
<dbReference type="GO" id="GO:0000002">
    <property type="term" value="P:mitochondrial genome maintenance"/>
    <property type="evidence" value="ECO:0007669"/>
    <property type="project" value="UniProtKB-UniRule"/>
</dbReference>
<dbReference type="GO" id="GO:1990456">
    <property type="term" value="P:mitochondrion-endoplasmic reticulum membrane tethering"/>
    <property type="evidence" value="ECO:0000318"/>
    <property type="project" value="GO_Central"/>
</dbReference>
<dbReference type="GO" id="GO:0015914">
    <property type="term" value="P:phospholipid transport"/>
    <property type="evidence" value="ECO:0000318"/>
    <property type="project" value="GO_Central"/>
</dbReference>
<dbReference type="GO" id="GO:0045040">
    <property type="term" value="P:protein insertion into mitochondrial outer membrane"/>
    <property type="evidence" value="ECO:0007669"/>
    <property type="project" value="UniProtKB-UniRule"/>
</dbReference>
<dbReference type="CDD" id="cd21672">
    <property type="entry name" value="SMP_Mdm12"/>
    <property type="match status" value="1"/>
</dbReference>
<dbReference type="HAMAP" id="MF_03104">
    <property type="entry name" value="Mdm12"/>
    <property type="match status" value="1"/>
</dbReference>
<dbReference type="InterPro" id="IPR027532">
    <property type="entry name" value="Mdm12"/>
</dbReference>
<dbReference type="InterPro" id="IPR031468">
    <property type="entry name" value="SMP_LBD"/>
</dbReference>
<dbReference type="PANTHER" id="PTHR28204">
    <property type="entry name" value="MITOCHONDRIAL DISTRIBUTION AND MORPHOLOGY PROTEIN 12"/>
    <property type="match status" value="1"/>
</dbReference>
<dbReference type="PANTHER" id="PTHR28204:SF1">
    <property type="entry name" value="MITOCHONDRIAL DISTRIBUTION AND MORPHOLOGY PROTEIN 12"/>
    <property type="match status" value="1"/>
</dbReference>
<dbReference type="PROSITE" id="PS51847">
    <property type="entry name" value="SMP"/>
    <property type="match status" value="1"/>
</dbReference>